<name>YME2_VANPO</name>
<evidence type="ECO:0000250" key="1"/>
<evidence type="ECO:0000255" key="2"/>
<evidence type="ECO:0000305" key="3"/>
<gene>
    <name type="primary">YME2</name>
    <name type="ORF">Kpol_513p24</name>
</gene>
<sequence>MYRSGLLTSGGGSAALTALRAIGSRSSLSNGKFIWNVGKRFITSEIQEKDQQAGESNTATDTGIIHKTEQETLVYFDNVYPRDTSLWNPAQWYNLLLVNQSREAVRDKITEFASPPSNPIHGLELRSTIPVKRDGGVFATFLVPSKYTKAEVNAIIQKNTAEESSKSIFSFFTRASAFPVKGFPWIEDLRRLPTNTIKVLFQGPPLTEEEIYSLFRRYGTIIDIVPASDSVKNASVRYKSLKGAICAKNCVSGIEIHNTVLHIQYQQEARNFVISNFFVNHTRIAIPVMLAVLSIIAVLIFDPIREFSIEQKITHIYSLSWDNYWIRQIRNFTNSTVTSFRNYWGVNENAFAEKHLWEERIEKVNDLKMWLQENNNTFVVVRGPRGSGKNELIMQHTVGDRTNVLYLDCDKLIKSRTDAKFLRNAASQLGYFPIFPWINSVTSVIDLMVQGLTGQKSGLSETKEAQFRTMLTTALTSIRRIALKGYKSVIVDGGEDVNVKEEDYLQQHPEAKPIIVIDRYEGKSEINGFIYKELADWASMLVQMNVAHVIFLTETVSSNQQLSESLPNQVFKTLVLSDASKENSRKYVLSQLQSFVDSKQKSKEDIKITENIEAEKSKITDQIDDALEPLGGRMLDLQAFVRRVKSGEQPTEALDKMIEQASEQITQIFLSDKVDGIKSAQAWELIELLSAKSVVSYDDIVFKPLFKAAPELGIVELENSGLITVSRNRGVLDKIRPAKPLYKAAFYYLVNSQELSTILRTRYLLKVITFETGRIKKWEDELRPLGKSGDPKLFRGRFEYLSGKIETSNKVIVASEAEIKALSERKQNQK</sequence>
<feature type="transit peptide" description="Mitochondrion" evidence="2">
    <location>
        <begin position="1"/>
        <end position="41"/>
    </location>
</feature>
<feature type="chain" id="PRO_0000343132" description="Mitochondrial escape protein 2">
    <location>
        <begin position="42"/>
        <end position="830"/>
    </location>
</feature>
<feature type="topological domain" description="Mitochondrial matrix" evidence="2">
    <location>
        <begin position="42"/>
        <end position="283"/>
    </location>
</feature>
<feature type="transmembrane region" description="Helical" evidence="2">
    <location>
        <begin position="284"/>
        <end position="304"/>
    </location>
</feature>
<feature type="topological domain" description="Mitochondrial intermembrane" evidence="2">
    <location>
        <begin position="305"/>
        <end position="830"/>
    </location>
</feature>
<feature type="domain" description="RRM">
    <location>
        <begin position="197"/>
        <end position="268"/>
    </location>
</feature>
<reference key="1">
    <citation type="journal article" date="2007" name="Proc. Natl. Acad. Sci. U.S.A.">
        <title>Independent sorting-out of thousands of duplicated gene pairs in two yeast species descended from a whole-genome duplication.</title>
        <authorList>
            <person name="Scannell D.R."/>
            <person name="Frank A.C."/>
            <person name="Conant G.C."/>
            <person name="Byrne K.P."/>
            <person name="Woolfit M."/>
            <person name="Wolfe K.H."/>
        </authorList>
    </citation>
    <scope>NUCLEOTIDE SEQUENCE [LARGE SCALE GENOMIC DNA]</scope>
    <source>
        <strain>ATCC 22028 / DSM 70294 / BCRC 21397 / CBS 2163 / NBRC 10782 / NRRL Y-8283 / UCD 57-17</strain>
    </source>
</reference>
<organism>
    <name type="scientific">Vanderwaltozyma polyspora (strain ATCC 22028 / DSM 70294 / BCRC 21397 / CBS 2163 / NBRC 10782 / NRRL Y-8283 / UCD 57-17)</name>
    <name type="common">Kluyveromyces polysporus</name>
    <dbReference type="NCBI Taxonomy" id="436907"/>
    <lineage>
        <taxon>Eukaryota</taxon>
        <taxon>Fungi</taxon>
        <taxon>Dikarya</taxon>
        <taxon>Ascomycota</taxon>
        <taxon>Saccharomycotina</taxon>
        <taxon>Saccharomycetes</taxon>
        <taxon>Saccharomycetales</taxon>
        <taxon>Saccharomycetaceae</taxon>
        <taxon>Vanderwaltozyma</taxon>
    </lineage>
</organism>
<keyword id="KW-0472">Membrane</keyword>
<keyword id="KW-0496">Mitochondrion</keyword>
<keyword id="KW-0999">Mitochondrion inner membrane</keyword>
<keyword id="KW-0507">mRNA processing</keyword>
<keyword id="KW-1185">Reference proteome</keyword>
<keyword id="KW-0694">RNA-binding</keyword>
<keyword id="KW-0809">Transit peptide</keyword>
<keyword id="KW-0812">Transmembrane</keyword>
<keyword id="KW-1133">Transmembrane helix</keyword>
<comment type="function">
    <text evidence="1">Plays a role in maintaining the mitochondrial genome and in controlling the mtDNA escape. Involved in the regulation of mtDNA nucleotide structure and number. May have a dispensable role in early maturation of pre-rRNA (By similarity).</text>
</comment>
<comment type="subcellular location">
    <subcellularLocation>
        <location evidence="1">Mitochondrion inner membrane</location>
        <topology evidence="1">Single-pass membrane protein</topology>
    </subcellularLocation>
</comment>
<comment type="similarity">
    <text evidence="3">Belongs to the YME2 family.</text>
</comment>
<dbReference type="EMBL" id="DS480423">
    <property type="protein sequence ID" value="EDO16508.1"/>
    <property type="molecule type" value="Genomic_DNA"/>
</dbReference>
<dbReference type="RefSeq" id="XP_001644366.1">
    <property type="nucleotide sequence ID" value="XM_001644316.1"/>
</dbReference>
<dbReference type="FunCoup" id="A7TML0">
    <property type="interactions" value="167"/>
</dbReference>
<dbReference type="STRING" id="436907.A7TML0"/>
<dbReference type="GeneID" id="5544662"/>
<dbReference type="KEGG" id="vpo:Kpol_513p24"/>
<dbReference type="eggNOG" id="ENOG502QS0P">
    <property type="taxonomic scope" value="Eukaryota"/>
</dbReference>
<dbReference type="HOGENOM" id="CLU_007861_1_0_1"/>
<dbReference type="InParanoid" id="A7TML0"/>
<dbReference type="OMA" id="FQFFRPY"/>
<dbReference type="OrthoDB" id="10267654at2759"/>
<dbReference type="PhylomeDB" id="A7TML0"/>
<dbReference type="Proteomes" id="UP000000267">
    <property type="component" value="Unassembled WGS sequence"/>
</dbReference>
<dbReference type="GO" id="GO:0005743">
    <property type="term" value="C:mitochondrial inner membrane"/>
    <property type="evidence" value="ECO:0007669"/>
    <property type="project" value="UniProtKB-SubCell"/>
</dbReference>
<dbReference type="GO" id="GO:0003723">
    <property type="term" value="F:RNA binding"/>
    <property type="evidence" value="ECO:0007669"/>
    <property type="project" value="UniProtKB-KW"/>
</dbReference>
<dbReference type="GO" id="GO:0000002">
    <property type="term" value="P:mitochondrial genome maintenance"/>
    <property type="evidence" value="ECO:0007669"/>
    <property type="project" value="EnsemblFungi"/>
</dbReference>
<dbReference type="GO" id="GO:0006397">
    <property type="term" value="P:mRNA processing"/>
    <property type="evidence" value="ECO:0007669"/>
    <property type="project" value="UniProtKB-KW"/>
</dbReference>
<dbReference type="CDD" id="cd12433">
    <property type="entry name" value="RRM_Yme2p_like"/>
    <property type="match status" value="1"/>
</dbReference>
<dbReference type="Gene3D" id="3.30.70.330">
    <property type="match status" value="1"/>
</dbReference>
<dbReference type="InterPro" id="IPR018850">
    <property type="entry name" value="Mt_escape_2_C"/>
</dbReference>
<dbReference type="InterPro" id="IPR012677">
    <property type="entry name" value="Nucleotide-bd_a/b_plait_sf"/>
</dbReference>
<dbReference type="InterPro" id="IPR035979">
    <property type="entry name" value="RBD_domain_sf"/>
</dbReference>
<dbReference type="InterPro" id="IPR000504">
    <property type="entry name" value="RRM_dom"/>
</dbReference>
<dbReference type="InterPro" id="IPR039627">
    <property type="entry name" value="Yme2_C"/>
</dbReference>
<dbReference type="InterPro" id="IPR034260">
    <property type="entry name" value="Yme2_RRM"/>
</dbReference>
<dbReference type="PANTHER" id="PTHR32198">
    <property type="entry name" value="MITOCHONDRIAL ESCAPE PROTEIN 2"/>
    <property type="match status" value="1"/>
</dbReference>
<dbReference type="PANTHER" id="PTHR32198:SF2">
    <property type="entry name" value="MITOCHONDRIAL ESCAPE PROTEIN 2"/>
    <property type="match status" value="1"/>
</dbReference>
<dbReference type="Pfam" id="PF10443">
    <property type="entry name" value="RNA12"/>
    <property type="match status" value="1"/>
</dbReference>
<dbReference type="Pfam" id="PF00076">
    <property type="entry name" value="RRM_1"/>
    <property type="match status" value="1"/>
</dbReference>
<dbReference type="SUPFAM" id="SSF54928">
    <property type="entry name" value="RNA-binding domain, RBD"/>
    <property type="match status" value="1"/>
</dbReference>
<protein>
    <recommendedName>
        <fullName>Mitochondrial escape protein 2</fullName>
    </recommendedName>
</protein>
<proteinExistence type="inferred from homology"/>
<accession>A7TML0</accession>